<sequence length="245" mass="26372">MIIPALDLIDGNVVRLHQGDYGQQRDYGSDALPRLQDYQDQGAEVLHLVDLTGAKNPAARQTPLLSRLLAGVNVPVQVGGGIRHQDDVDALLQAGATRVVVGSTAVKQPEDVQQWFRQYGADAIVLALDVRIDADNRKEVAIGGWQEAAGMTLEQAIEQFLPYGLKHVLCTDISRDGTLAGSNVDLYREVSARYPQIAFQSSGGIGSLQDIRALRGSGAQGVIVGRALLENKFTVSEAISCWQNG</sequence>
<protein>
    <recommendedName>
        <fullName evidence="1">1-(5-phosphoribosyl)-5-[(5-phosphoribosylamino)methylideneamino] imidazole-4-carboxamide isomerase</fullName>
        <ecNumber evidence="1">5.3.1.16</ecNumber>
    </recommendedName>
    <alternativeName>
        <fullName evidence="1">Phosphoribosylformimino-5-aminoimidazole carboxamide ribotide isomerase</fullName>
    </alternativeName>
</protein>
<proteinExistence type="inferred from homology"/>
<dbReference type="EC" id="5.3.1.16" evidence="1"/>
<dbReference type="EMBL" id="CU468135">
    <property type="protein sequence ID" value="CAO96397.1"/>
    <property type="molecule type" value="Genomic_DNA"/>
</dbReference>
<dbReference type="RefSeq" id="WP_012441091.1">
    <property type="nucleotide sequence ID" value="NC_010694.1"/>
</dbReference>
<dbReference type="SMR" id="B2VFL2"/>
<dbReference type="STRING" id="465817.ETA_13510"/>
<dbReference type="KEGG" id="eta:ETA_13510"/>
<dbReference type="eggNOG" id="COG0106">
    <property type="taxonomic scope" value="Bacteria"/>
</dbReference>
<dbReference type="HOGENOM" id="CLU_048577_1_2_6"/>
<dbReference type="OrthoDB" id="9807749at2"/>
<dbReference type="UniPathway" id="UPA00031">
    <property type="reaction ID" value="UER00009"/>
</dbReference>
<dbReference type="Proteomes" id="UP000001726">
    <property type="component" value="Chromosome"/>
</dbReference>
<dbReference type="GO" id="GO:0005737">
    <property type="term" value="C:cytoplasm"/>
    <property type="evidence" value="ECO:0007669"/>
    <property type="project" value="UniProtKB-SubCell"/>
</dbReference>
<dbReference type="GO" id="GO:0003949">
    <property type="term" value="F:1-(5-phosphoribosyl)-5-[(5-phosphoribosylamino)methylideneamino]imidazole-4-carboxamide isomerase activity"/>
    <property type="evidence" value="ECO:0007669"/>
    <property type="project" value="UniProtKB-UniRule"/>
</dbReference>
<dbReference type="GO" id="GO:0000105">
    <property type="term" value="P:L-histidine biosynthetic process"/>
    <property type="evidence" value="ECO:0007669"/>
    <property type="project" value="UniProtKB-UniRule"/>
</dbReference>
<dbReference type="GO" id="GO:0000162">
    <property type="term" value="P:L-tryptophan biosynthetic process"/>
    <property type="evidence" value="ECO:0007669"/>
    <property type="project" value="TreeGrafter"/>
</dbReference>
<dbReference type="CDD" id="cd04732">
    <property type="entry name" value="HisA"/>
    <property type="match status" value="1"/>
</dbReference>
<dbReference type="FunFam" id="3.20.20.70:FF:000009">
    <property type="entry name" value="1-(5-phosphoribosyl)-5-[(5-phosphoribosylamino)methylideneamino] imidazole-4-carboxamide isomerase"/>
    <property type="match status" value="1"/>
</dbReference>
<dbReference type="Gene3D" id="3.20.20.70">
    <property type="entry name" value="Aldolase class I"/>
    <property type="match status" value="1"/>
</dbReference>
<dbReference type="HAMAP" id="MF_01014">
    <property type="entry name" value="HisA"/>
    <property type="match status" value="1"/>
</dbReference>
<dbReference type="InterPro" id="IPR013785">
    <property type="entry name" value="Aldolase_TIM"/>
</dbReference>
<dbReference type="InterPro" id="IPR006062">
    <property type="entry name" value="His_biosynth"/>
</dbReference>
<dbReference type="InterPro" id="IPR006063">
    <property type="entry name" value="HisA_bact_arch"/>
</dbReference>
<dbReference type="InterPro" id="IPR044524">
    <property type="entry name" value="Isoase_HisA-like"/>
</dbReference>
<dbReference type="InterPro" id="IPR023016">
    <property type="entry name" value="Isoase_HisA-like_bact"/>
</dbReference>
<dbReference type="InterPro" id="IPR011060">
    <property type="entry name" value="RibuloseP-bd_barrel"/>
</dbReference>
<dbReference type="NCBIfam" id="TIGR00007">
    <property type="entry name" value="1-(5-phosphoribosyl)-5-[(5-phosphoribosylamino)methylideneamino]imidazole-4-carboxamide isomerase"/>
    <property type="match status" value="1"/>
</dbReference>
<dbReference type="PANTHER" id="PTHR43090">
    <property type="entry name" value="1-(5-PHOSPHORIBOSYL)-5-[(5-PHOSPHORIBOSYLAMINO)METHYLIDENEAMINO] IMIDAZOLE-4-CARBOXAMIDE ISOMERASE"/>
    <property type="match status" value="1"/>
</dbReference>
<dbReference type="PANTHER" id="PTHR43090:SF2">
    <property type="entry name" value="1-(5-PHOSPHORIBOSYL)-5-[(5-PHOSPHORIBOSYLAMINO)METHYLIDENEAMINO] IMIDAZOLE-4-CARBOXAMIDE ISOMERASE"/>
    <property type="match status" value="1"/>
</dbReference>
<dbReference type="Pfam" id="PF00977">
    <property type="entry name" value="His_biosynth"/>
    <property type="match status" value="1"/>
</dbReference>
<dbReference type="SUPFAM" id="SSF51366">
    <property type="entry name" value="Ribulose-phoshate binding barrel"/>
    <property type="match status" value="1"/>
</dbReference>
<keyword id="KW-0028">Amino-acid biosynthesis</keyword>
<keyword id="KW-0963">Cytoplasm</keyword>
<keyword id="KW-0368">Histidine biosynthesis</keyword>
<keyword id="KW-0413">Isomerase</keyword>
<keyword id="KW-1185">Reference proteome</keyword>
<comment type="catalytic activity">
    <reaction evidence="1">
        <text>1-(5-phospho-beta-D-ribosyl)-5-[(5-phospho-beta-D-ribosylamino)methylideneamino]imidazole-4-carboxamide = 5-[(5-phospho-1-deoxy-D-ribulos-1-ylimino)methylamino]-1-(5-phospho-beta-D-ribosyl)imidazole-4-carboxamide</text>
        <dbReference type="Rhea" id="RHEA:15469"/>
        <dbReference type="ChEBI" id="CHEBI:58435"/>
        <dbReference type="ChEBI" id="CHEBI:58525"/>
        <dbReference type="EC" id="5.3.1.16"/>
    </reaction>
</comment>
<comment type="pathway">
    <text evidence="1">Amino-acid biosynthesis; L-histidine biosynthesis; L-histidine from 5-phospho-alpha-D-ribose 1-diphosphate: step 4/9.</text>
</comment>
<comment type="subcellular location">
    <subcellularLocation>
        <location evidence="1">Cytoplasm</location>
    </subcellularLocation>
</comment>
<comment type="similarity">
    <text evidence="1">Belongs to the HisA/HisF family.</text>
</comment>
<name>HIS4_ERWT9</name>
<feature type="chain" id="PRO_1000135117" description="1-(5-phosphoribosyl)-5-[(5-phosphoribosylamino)methylideneamino] imidazole-4-carboxamide isomerase">
    <location>
        <begin position="1"/>
        <end position="245"/>
    </location>
</feature>
<feature type="active site" description="Proton acceptor" evidence="1">
    <location>
        <position position="7"/>
    </location>
</feature>
<feature type="active site" description="Proton donor" evidence="1">
    <location>
        <position position="129"/>
    </location>
</feature>
<reference key="1">
    <citation type="journal article" date="2008" name="Environ. Microbiol.">
        <title>The genome of Erwinia tasmaniensis strain Et1/99, a non-pathogenic bacterium in the genus Erwinia.</title>
        <authorList>
            <person name="Kube M."/>
            <person name="Migdoll A.M."/>
            <person name="Mueller I."/>
            <person name="Kuhl H."/>
            <person name="Beck A."/>
            <person name="Reinhardt R."/>
            <person name="Geider K."/>
        </authorList>
    </citation>
    <scope>NUCLEOTIDE SEQUENCE [LARGE SCALE GENOMIC DNA]</scope>
    <source>
        <strain>DSM 17950 / CFBP 7177 / CIP 109463 / NCPPB 4357 / Et1/99</strain>
    </source>
</reference>
<evidence type="ECO:0000255" key="1">
    <source>
        <dbReference type="HAMAP-Rule" id="MF_01014"/>
    </source>
</evidence>
<organism>
    <name type="scientific">Erwinia tasmaniensis (strain DSM 17950 / CFBP 7177 / CIP 109463 / NCPPB 4357 / Et1/99)</name>
    <dbReference type="NCBI Taxonomy" id="465817"/>
    <lineage>
        <taxon>Bacteria</taxon>
        <taxon>Pseudomonadati</taxon>
        <taxon>Pseudomonadota</taxon>
        <taxon>Gammaproteobacteria</taxon>
        <taxon>Enterobacterales</taxon>
        <taxon>Erwiniaceae</taxon>
        <taxon>Erwinia</taxon>
    </lineage>
</organism>
<gene>
    <name evidence="1" type="primary">hisA</name>
    <name type="ordered locus">ETA_13510</name>
</gene>
<accession>B2VFL2</accession>